<feature type="chain" id="PRO_0000216113" description="NADPH dehydrogenase">
    <location>
        <begin position="1"/>
        <end position="345"/>
    </location>
</feature>
<feature type="binding site" evidence="1">
    <location>
        <begin position="23"/>
        <end position="26"/>
    </location>
    <ligand>
        <name>FMN</name>
        <dbReference type="ChEBI" id="CHEBI:58210"/>
    </ligand>
</feature>
<feature type="binding site" evidence="1">
    <location>
        <position position="28"/>
    </location>
    <ligand>
        <name>substrate</name>
    </ligand>
</feature>
<feature type="binding site" evidence="1">
    <location>
        <position position="60"/>
    </location>
    <ligand>
        <name>FMN</name>
        <dbReference type="ChEBI" id="CHEBI:58210"/>
    </ligand>
</feature>
<feature type="binding site" evidence="1">
    <location>
        <position position="102"/>
    </location>
    <ligand>
        <name>FMN</name>
        <dbReference type="ChEBI" id="CHEBI:58210"/>
    </ligand>
</feature>
<feature type="binding site" evidence="1">
    <location>
        <begin position="164"/>
        <end position="167"/>
    </location>
    <ligand>
        <name>substrate</name>
    </ligand>
</feature>
<feature type="binding site" evidence="1">
    <location>
        <position position="215"/>
    </location>
    <ligand>
        <name>FMN</name>
        <dbReference type="ChEBI" id="CHEBI:58210"/>
    </ligand>
</feature>
<feature type="binding site" evidence="1">
    <location>
        <begin position="307"/>
        <end position="308"/>
    </location>
    <ligand>
        <name>FMN</name>
        <dbReference type="ChEBI" id="CHEBI:58210"/>
    </ligand>
</feature>
<sequence length="345" mass="38536">MNYKLFSPYTIKDVTLKNRIVMSPMCMYSSENGDGQVTNFHLIHYGTRAAGQVGLVMIEATAVLPEGRISNKDLGIWDDSLIEGLHKTTTFIHDNGAKAAIQLAHAGRKAELETDALAPSAIPFNETMKMPIEMSKHQIKDTVLAFQQAAVRSKQAGFDVIEIHGAHGYLINEFLSPLTNKRTDEYGGSPENRYRFLREIIDSINEVWNGPLFVRISANDYHPDGLTVQDYVQYTKWMKEQGVDLIDCSSGAVVPARIDVYPGYQVQYAKHIKEHANIATGAVGLITTGAQAEQILNNNEADLIFIGRELLRNPYFPRIAANELGFELEEPYQYERAPGKISTNK</sequence>
<gene>
    <name evidence="1" type="primary">namA</name>
    <name type="ordered locus">BCE_2106</name>
</gene>
<protein>
    <recommendedName>
        <fullName evidence="1">NADPH dehydrogenase</fullName>
        <ecNumber evidence="1">1.6.99.1</ecNumber>
    </recommendedName>
</protein>
<accession>Q739N4</accession>
<name>NAMA_BACC1</name>
<reference key="1">
    <citation type="journal article" date="2004" name="Nucleic Acids Res.">
        <title>The genome sequence of Bacillus cereus ATCC 10987 reveals metabolic adaptations and a large plasmid related to Bacillus anthracis pXO1.</title>
        <authorList>
            <person name="Rasko D.A."/>
            <person name="Ravel J."/>
            <person name="Oekstad O.A."/>
            <person name="Helgason E."/>
            <person name="Cer R.Z."/>
            <person name="Jiang L."/>
            <person name="Shores K.A."/>
            <person name="Fouts D.E."/>
            <person name="Tourasse N.J."/>
            <person name="Angiuoli S.V."/>
            <person name="Kolonay J.F."/>
            <person name="Nelson W.C."/>
            <person name="Kolstoe A.-B."/>
            <person name="Fraser C.M."/>
            <person name="Read T.D."/>
        </authorList>
    </citation>
    <scope>NUCLEOTIDE SEQUENCE [LARGE SCALE GENOMIC DNA]</scope>
    <source>
        <strain>ATCC 10987 / NRS 248</strain>
    </source>
</reference>
<proteinExistence type="inferred from homology"/>
<organism>
    <name type="scientific">Bacillus cereus (strain ATCC 10987 / NRS 248)</name>
    <dbReference type="NCBI Taxonomy" id="222523"/>
    <lineage>
        <taxon>Bacteria</taxon>
        <taxon>Bacillati</taxon>
        <taxon>Bacillota</taxon>
        <taxon>Bacilli</taxon>
        <taxon>Bacillales</taxon>
        <taxon>Bacillaceae</taxon>
        <taxon>Bacillus</taxon>
        <taxon>Bacillus cereus group</taxon>
    </lineage>
</organism>
<comment type="function">
    <text evidence="1">Catalyzes the reduction of the double bond of an array of alpha,beta-unsaturated aldehydes and ketones. It also reduces the nitro group of nitroester and nitroaromatic compounds. It could have a role in detoxification processes.</text>
</comment>
<comment type="catalytic activity">
    <reaction evidence="1">
        <text>A + NADPH + H(+) = AH2 + NADP(+)</text>
        <dbReference type="Rhea" id="RHEA:13149"/>
        <dbReference type="ChEBI" id="CHEBI:13193"/>
        <dbReference type="ChEBI" id="CHEBI:15378"/>
        <dbReference type="ChEBI" id="CHEBI:17499"/>
        <dbReference type="ChEBI" id="CHEBI:57783"/>
        <dbReference type="ChEBI" id="CHEBI:58349"/>
        <dbReference type="EC" id="1.6.99.1"/>
    </reaction>
</comment>
<comment type="cofactor">
    <cofactor evidence="1">
        <name>FMN</name>
        <dbReference type="ChEBI" id="CHEBI:58210"/>
    </cofactor>
</comment>
<comment type="subunit">
    <text evidence="1">Homotetramer.</text>
</comment>
<comment type="similarity">
    <text evidence="1">Belongs to the NADH:flavin oxidoreductase/NADH oxidase family. NamA subfamily.</text>
</comment>
<dbReference type="EC" id="1.6.99.1" evidence="1"/>
<dbReference type="EMBL" id="AE017194">
    <property type="protein sequence ID" value="AAS41027.1"/>
    <property type="molecule type" value="Genomic_DNA"/>
</dbReference>
<dbReference type="SMR" id="Q739N4"/>
<dbReference type="KEGG" id="bca:BCE_2106"/>
<dbReference type="HOGENOM" id="CLU_012153_2_1_9"/>
<dbReference type="Proteomes" id="UP000002527">
    <property type="component" value="Chromosome"/>
</dbReference>
<dbReference type="GO" id="GO:0010181">
    <property type="term" value="F:FMN binding"/>
    <property type="evidence" value="ECO:0007669"/>
    <property type="project" value="UniProtKB-UniRule"/>
</dbReference>
<dbReference type="GO" id="GO:0050661">
    <property type="term" value="F:NADP binding"/>
    <property type="evidence" value="ECO:0007669"/>
    <property type="project" value="UniProtKB-UniRule"/>
</dbReference>
<dbReference type="GO" id="GO:0003959">
    <property type="term" value="F:NADPH dehydrogenase activity"/>
    <property type="evidence" value="ECO:0007669"/>
    <property type="project" value="UniProtKB-UniRule"/>
</dbReference>
<dbReference type="GO" id="GO:0009636">
    <property type="term" value="P:response to toxic substance"/>
    <property type="evidence" value="ECO:0007669"/>
    <property type="project" value="UniProtKB-KW"/>
</dbReference>
<dbReference type="CDD" id="cd02932">
    <property type="entry name" value="OYE_YqiM_FMN"/>
    <property type="match status" value="1"/>
</dbReference>
<dbReference type="Gene3D" id="3.20.20.70">
    <property type="entry name" value="Aldolase class I"/>
    <property type="match status" value="1"/>
</dbReference>
<dbReference type="HAMAP" id="MF_01614">
    <property type="entry name" value="NamA"/>
    <property type="match status" value="1"/>
</dbReference>
<dbReference type="InterPro" id="IPR013785">
    <property type="entry name" value="Aldolase_TIM"/>
</dbReference>
<dbReference type="InterPro" id="IPR023663">
    <property type="entry name" value="NADPH_DH_bac"/>
</dbReference>
<dbReference type="InterPro" id="IPR001155">
    <property type="entry name" value="OxRdtase_FMN_N"/>
</dbReference>
<dbReference type="InterPro" id="IPR044152">
    <property type="entry name" value="YqjM-like"/>
</dbReference>
<dbReference type="NCBIfam" id="NF010047">
    <property type="entry name" value="PRK13523.1"/>
    <property type="match status" value="1"/>
</dbReference>
<dbReference type="PANTHER" id="PTHR43303">
    <property type="entry name" value="NADPH DEHYDROGENASE C23G7.10C-RELATED"/>
    <property type="match status" value="1"/>
</dbReference>
<dbReference type="PANTHER" id="PTHR43303:SF4">
    <property type="entry name" value="NADPH DEHYDROGENASE C23G7.10C-RELATED"/>
    <property type="match status" value="1"/>
</dbReference>
<dbReference type="Pfam" id="PF00724">
    <property type="entry name" value="Oxidored_FMN"/>
    <property type="match status" value="1"/>
</dbReference>
<dbReference type="SUPFAM" id="SSF51395">
    <property type="entry name" value="FMN-linked oxidoreductases"/>
    <property type="match status" value="1"/>
</dbReference>
<keyword id="KW-0216">Detoxification</keyword>
<keyword id="KW-0285">Flavoprotein</keyword>
<keyword id="KW-0288">FMN</keyword>
<keyword id="KW-0521">NADP</keyword>
<keyword id="KW-0560">Oxidoreductase</keyword>
<evidence type="ECO:0000255" key="1">
    <source>
        <dbReference type="HAMAP-Rule" id="MF_01614"/>
    </source>
</evidence>